<name>RL21_UREP2</name>
<gene>
    <name evidence="1" type="primary">rplU</name>
    <name type="ordered locus">UPA3_0219</name>
</gene>
<evidence type="ECO:0000255" key="1">
    <source>
        <dbReference type="HAMAP-Rule" id="MF_01363"/>
    </source>
</evidence>
<evidence type="ECO:0000305" key="2"/>
<keyword id="KW-0687">Ribonucleoprotein</keyword>
<keyword id="KW-0689">Ribosomal protein</keyword>
<keyword id="KW-0694">RNA-binding</keyword>
<keyword id="KW-0699">rRNA-binding</keyword>
<organism>
    <name type="scientific">Ureaplasma parvum serovar 3 (strain ATCC 27815 / 27 / NCTC 11736)</name>
    <dbReference type="NCBI Taxonomy" id="505682"/>
    <lineage>
        <taxon>Bacteria</taxon>
        <taxon>Bacillati</taxon>
        <taxon>Mycoplasmatota</taxon>
        <taxon>Mycoplasmoidales</taxon>
        <taxon>Mycoplasmoidaceae</taxon>
        <taxon>Ureaplasma</taxon>
    </lineage>
</organism>
<dbReference type="EMBL" id="CP000942">
    <property type="protein sequence ID" value="ACA33226.1"/>
    <property type="molecule type" value="Genomic_DNA"/>
</dbReference>
<dbReference type="RefSeq" id="WP_006688851.1">
    <property type="nucleotide sequence ID" value="NC_010503.1"/>
</dbReference>
<dbReference type="SMR" id="B1AIK0"/>
<dbReference type="GeneID" id="29672592"/>
<dbReference type="KEGG" id="upa:UPA3_0219"/>
<dbReference type="HOGENOM" id="CLU_061463_3_1_14"/>
<dbReference type="Proteomes" id="UP000002162">
    <property type="component" value="Chromosome"/>
</dbReference>
<dbReference type="GO" id="GO:0005737">
    <property type="term" value="C:cytoplasm"/>
    <property type="evidence" value="ECO:0007669"/>
    <property type="project" value="UniProtKB-ARBA"/>
</dbReference>
<dbReference type="GO" id="GO:1990904">
    <property type="term" value="C:ribonucleoprotein complex"/>
    <property type="evidence" value="ECO:0007669"/>
    <property type="project" value="UniProtKB-KW"/>
</dbReference>
<dbReference type="GO" id="GO:0005840">
    <property type="term" value="C:ribosome"/>
    <property type="evidence" value="ECO:0007669"/>
    <property type="project" value="UniProtKB-KW"/>
</dbReference>
<dbReference type="GO" id="GO:0019843">
    <property type="term" value="F:rRNA binding"/>
    <property type="evidence" value="ECO:0007669"/>
    <property type="project" value="UniProtKB-UniRule"/>
</dbReference>
<dbReference type="GO" id="GO:0003735">
    <property type="term" value="F:structural constituent of ribosome"/>
    <property type="evidence" value="ECO:0007669"/>
    <property type="project" value="InterPro"/>
</dbReference>
<dbReference type="GO" id="GO:0006412">
    <property type="term" value="P:translation"/>
    <property type="evidence" value="ECO:0007669"/>
    <property type="project" value="UniProtKB-UniRule"/>
</dbReference>
<dbReference type="HAMAP" id="MF_01363">
    <property type="entry name" value="Ribosomal_bL21"/>
    <property type="match status" value="1"/>
</dbReference>
<dbReference type="InterPro" id="IPR028909">
    <property type="entry name" value="bL21-like"/>
</dbReference>
<dbReference type="InterPro" id="IPR036164">
    <property type="entry name" value="bL21-like_sf"/>
</dbReference>
<dbReference type="InterPro" id="IPR001787">
    <property type="entry name" value="Ribosomal_bL21"/>
</dbReference>
<dbReference type="InterPro" id="IPR018258">
    <property type="entry name" value="Ribosomal_bL21_CS"/>
</dbReference>
<dbReference type="NCBIfam" id="TIGR00061">
    <property type="entry name" value="L21"/>
    <property type="match status" value="1"/>
</dbReference>
<dbReference type="PANTHER" id="PTHR21349">
    <property type="entry name" value="50S RIBOSOMAL PROTEIN L21"/>
    <property type="match status" value="1"/>
</dbReference>
<dbReference type="PANTHER" id="PTHR21349:SF0">
    <property type="entry name" value="LARGE RIBOSOMAL SUBUNIT PROTEIN BL21M"/>
    <property type="match status" value="1"/>
</dbReference>
<dbReference type="Pfam" id="PF00829">
    <property type="entry name" value="Ribosomal_L21p"/>
    <property type="match status" value="1"/>
</dbReference>
<dbReference type="SUPFAM" id="SSF141091">
    <property type="entry name" value="L21p-like"/>
    <property type="match status" value="1"/>
</dbReference>
<dbReference type="PROSITE" id="PS01169">
    <property type="entry name" value="RIBOSOMAL_L21"/>
    <property type="match status" value="1"/>
</dbReference>
<sequence length="100" mass="11330">MFAIFQTGGKQYKVQQGEKIYVEKLDLEVGSKISFDQVIMVEGSVGTPFVKNAVVNATVIKQGKQKKINIIKFKSKKHHLKRQGHRQPYTQLVIDSISVK</sequence>
<accession>B1AIK0</accession>
<feature type="chain" id="PRO_1000087009" description="Large ribosomal subunit protein bL21">
    <location>
        <begin position="1"/>
        <end position="100"/>
    </location>
</feature>
<comment type="function">
    <text evidence="1">This protein binds to 23S rRNA in the presence of protein L20.</text>
</comment>
<comment type="subunit">
    <text evidence="1">Part of the 50S ribosomal subunit. Contacts protein L20.</text>
</comment>
<comment type="similarity">
    <text evidence="1">Belongs to the bacterial ribosomal protein bL21 family.</text>
</comment>
<reference key="1">
    <citation type="submission" date="2008-02" db="EMBL/GenBank/DDBJ databases">
        <title>Genome sequence of Ureaplasma parvum serovar 3.</title>
        <authorList>
            <person name="Methe B.A."/>
            <person name="Glass J."/>
            <person name="Waites K."/>
            <person name="Shrivastava S."/>
        </authorList>
    </citation>
    <scope>NUCLEOTIDE SEQUENCE [LARGE SCALE GENOMIC DNA]</scope>
    <source>
        <strain>ATCC 27815 / 27 / NCTC 11736</strain>
    </source>
</reference>
<proteinExistence type="inferred from homology"/>
<protein>
    <recommendedName>
        <fullName evidence="1">Large ribosomal subunit protein bL21</fullName>
    </recommendedName>
    <alternativeName>
        <fullName evidence="2">50S ribosomal protein L21</fullName>
    </alternativeName>
</protein>